<protein>
    <recommendedName>
        <fullName evidence="1">Chromosomal replication initiator protein DnaA</fullName>
    </recommendedName>
</protein>
<organism>
    <name type="scientific">Prochlorococcus marinus subsp. pastoris (strain CCMP1986 / NIES-2087 / MED4)</name>
    <dbReference type="NCBI Taxonomy" id="59919"/>
    <lineage>
        <taxon>Bacteria</taxon>
        <taxon>Bacillati</taxon>
        <taxon>Cyanobacteriota</taxon>
        <taxon>Cyanophyceae</taxon>
        <taxon>Synechococcales</taxon>
        <taxon>Prochlorococcaceae</taxon>
        <taxon>Prochlorococcus</taxon>
    </lineage>
</organism>
<gene>
    <name evidence="1" type="primary">dnaA</name>
    <name type="ordered locus">PMM0565</name>
</gene>
<name>DNAA_PROMP</name>
<reference key="1">
    <citation type="journal article" date="2003" name="Nature">
        <title>Genome divergence in two Prochlorococcus ecotypes reflects oceanic niche differentiation.</title>
        <authorList>
            <person name="Rocap G."/>
            <person name="Larimer F.W."/>
            <person name="Lamerdin J.E."/>
            <person name="Malfatti S."/>
            <person name="Chain P."/>
            <person name="Ahlgren N.A."/>
            <person name="Arellano A."/>
            <person name="Coleman M."/>
            <person name="Hauser L."/>
            <person name="Hess W.R."/>
            <person name="Johnson Z.I."/>
            <person name="Land M.L."/>
            <person name="Lindell D."/>
            <person name="Post A.F."/>
            <person name="Regala W."/>
            <person name="Shah M."/>
            <person name="Shaw S.L."/>
            <person name="Steglich C."/>
            <person name="Sullivan M.B."/>
            <person name="Ting C.S."/>
            <person name="Tolonen A."/>
            <person name="Webb E.A."/>
            <person name="Zinser E.R."/>
            <person name="Chisholm S.W."/>
        </authorList>
    </citation>
    <scope>NUCLEOTIDE SEQUENCE [LARGE SCALE GENOMIC DNA]</scope>
    <source>
        <strain>CCMP1986 / NIES-2087 / MED4</strain>
    </source>
</reference>
<dbReference type="EMBL" id="BX548174">
    <property type="protein sequence ID" value="CAE19024.1"/>
    <property type="molecule type" value="Genomic_DNA"/>
</dbReference>
<dbReference type="RefSeq" id="WP_011132199.1">
    <property type="nucleotide sequence ID" value="NC_005072.1"/>
</dbReference>
<dbReference type="SMR" id="P0A3A2"/>
<dbReference type="STRING" id="59919.PMM0565"/>
<dbReference type="KEGG" id="pmm:PMM0565"/>
<dbReference type="eggNOG" id="COG0593">
    <property type="taxonomic scope" value="Bacteria"/>
</dbReference>
<dbReference type="HOGENOM" id="CLU_026910_3_1_3"/>
<dbReference type="OrthoDB" id="9807019at2"/>
<dbReference type="Proteomes" id="UP000001026">
    <property type="component" value="Chromosome"/>
</dbReference>
<dbReference type="GO" id="GO:0005737">
    <property type="term" value="C:cytoplasm"/>
    <property type="evidence" value="ECO:0007669"/>
    <property type="project" value="UniProtKB-SubCell"/>
</dbReference>
<dbReference type="GO" id="GO:0005886">
    <property type="term" value="C:plasma membrane"/>
    <property type="evidence" value="ECO:0007669"/>
    <property type="project" value="TreeGrafter"/>
</dbReference>
<dbReference type="GO" id="GO:0005524">
    <property type="term" value="F:ATP binding"/>
    <property type="evidence" value="ECO:0007669"/>
    <property type="project" value="UniProtKB-UniRule"/>
</dbReference>
<dbReference type="GO" id="GO:0016887">
    <property type="term" value="F:ATP hydrolysis activity"/>
    <property type="evidence" value="ECO:0007669"/>
    <property type="project" value="InterPro"/>
</dbReference>
<dbReference type="GO" id="GO:0003688">
    <property type="term" value="F:DNA replication origin binding"/>
    <property type="evidence" value="ECO:0007669"/>
    <property type="project" value="UniProtKB-UniRule"/>
</dbReference>
<dbReference type="GO" id="GO:0008289">
    <property type="term" value="F:lipid binding"/>
    <property type="evidence" value="ECO:0007669"/>
    <property type="project" value="UniProtKB-KW"/>
</dbReference>
<dbReference type="GO" id="GO:0006270">
    <property type="term" value="P:DNA replication initiation"/>
    <property type="evidence" value="ECO:0007669"/>
    <property type="project" value="UniProtKB-UniRule"/>
</dbReference>
<dbReference type="GO" id="GO:0006275">
    <property type="term" value="P:regulation of DNA replication"/>
    <property type="evidence" value="ECO:0007669"/>
    <property type="project" value="UniProtKB-UniRule"/>
</dbReference>
<dbReference type="CDD" id="cd00009">
    <property type="entry name" value="AAA"/>
    <property type="match status" value="1"/>
</dbReference>
<dbReference type="CDD" id="cd06571">
    <property type="entry name" value="Bac_DnaA_C"/>
    <property type="match status" value="1"/>
</dbReference>
<dbReference type="FunFam" id="3.40.50.300:FF:000668">
    <property type="entry name" value="Chromosomal replication initiator protein DnaA"/>
    <property type="match status" value="1"/>
</dbReference>
<dbReference type="Gene3D" id="1.10.1750.10">
    <property type="match status" value="1"/>
</dbReference>
<dbReference type="Gene3D" id="1.10.8.60">
    <property type="match status" value="1"/>
</dbReference>
<dbReference type="Gene3D" id="3.30.300.180">
    <property type="match status" value="1"/>
</dbReference>
<dbReference type="Gene3D" id="3.40.50.300">
    <property type="entry name" value="P-loop containing nucleotide triphosphate hydrolases"/>
    <property type="match status" value="1"/>
</dbReference>
<dbReference type="HAMAP" id="MF_00377">
    <property type="entry name" value="DnaA_bact"/>
    <property type="match status" value="1"/>
</dbReference>
<dbReference type="InterPro" id="IPR003593">
    <property type="entry name" value="AAA+_ATPase"/>
</dbReference>
<dbReference type="InterPro" id="IPR001957">
    <property type="entry name" value="Chromosome_initiator_DnaA"/>
</dbReference>
<dbReference type="InterPro" id="IPR020591">
    <property type="entry name" value="Chromosome_initiator_DnaA-like"/>
</dbReference>
<dbReference type="InterPro" id="IPR018312">
    <property type="entry name" value="Chromosome_initiator_DnaA_CS"/>
</dbReference>
<dbReference type="InterPro" id="IPR013159">
    <property type="entry name" value="DnaA_C"/>
</dbReference>
<dbReference type="InterPro" id="IPR013317">
    <property type="entry name" value="DnaA_dom"/>
</dbReference>
<dbReference type="InterPro" id="IPR024633">
    <property type="entry name" value="DnaA_N_dom"/>
</dbReference>
<dbReference type="InterPro" id="IPR038454">
    <property type="entry name" value="DnaA_N_sf"/>
</dbReference>
<dbReference type="InterPro" id="IPR027417">
    <property type="entry name" value="P-loop_NTPase"/>
</dbReference>
<dbReference type="InterPro" id="IPR010921">
    <property type="entry name" value="Trp_repressor/repl_initiator"/>
</dbReference>
<dbReference type="NCBIfam" id="TIGR00362">
    <property type="entry name" value="DnaA"/>
    <property type="match status" value="1"/>
</dbReference>
<dbReference type="PANTHER" id="PTHR30050">
    <property type="entry name" value="CHROMOSOMAL REPLICATION INITIATOR PROTEIN DNAA"/>
    <property type="match status" value="1"/>
</dbReference>
<dbReference type="PANTHER" id="PTHR30050:SF2">
    <property type="entry name" value="CHROMOSOMAL REPLICATION INITIATOR PROTEIN DNAA"/>
    <property type="match status" value="1"/>
</dbReference>
<dbReference type="Pfam" id="PF00308">
    <property type="entry name" value="Bac_DnaA"/>
    <property type="match status" value="1"/>
</dbReference>
<dbReference type="Pfam" id="PF08299">
    <property type="entry name" value="Bac_DnaA_C"/>
    <property type="match status" value="1"/>
</dbReference>
<dbReference type="Pfam" id="PF11638">
    <property type="entry name" value="DnaA_N"/>
    <property type="match status" value="1"/>
</dbReference>
<dbReference type="PRINTS" id="PR00051">
    <property type="entry name" value="DNAA"/>
</dbReference>
<dbReference type="SMART" id="SM00382">
    <property type="entry name" value="AAA"/>
    <property type="match status" value="1"/>
</dbReference>
<dbReference type="SMART" id="SM00760">
    <property type="entry name" value="Bac_DnaA_C"/>
    <property type="match status" value="1"/>
</dbReference>
<dbReference type="SUPFAM" id="SSF52540">
    <property type="entry name" value="P-loop containing nucleoside triphosphate hydrolases"/>
    <property type="match status" value="1"/>
</dbReference>
<dbReference type="SUPFAM" id="SSF48295">
    <property type="entry name" value="TrpR-like"/>
    <property type="match status" value="1"/>
</dbReference>
<dbReference type="PROSITE" id="PS01008">
    <property type="entry name" value="DNAA"/>
    <property type="match status" value="1"/>
</dbReference>
<feature type="chain" id="PRO_0000114236" description="Chromosomal replication initiator protein DnaA">
    <location>
        <begin position="1"/>
        <end position="463"/>
    </location>
</feature>
<feature type="region of interest" description="Domain I, interacts with DnaA modulators" evidence="1">
    <location>
        <begin position="1"/>
        <end position="84"/>
    </location>
</feature>
<feature type="region of interest" description="Domain II" evidence="1">
    <location>
        <begin position="84"/>
        <end position="122"/>
    </location>
</feature>
<feature type="region of interest" description="Domain III, AAA+ region" evidence="1">
    <location>
        <begin position="123"/>
        <end position="339"/>
    </location>
</feature>
<feature type="region of interest" description="Domain IV, binds dsDNA" evidence="1">
    <location>
        <begin position="340"/>
        <end position="463"/>
    </location>
</feature>
<feature type="binding site" evidence="1">
    <location>
        <position position="167"/>
    </location>
    <ligand>
        <name>ATP</name>
        <dbReference type="ChEBI" id="CHEBI:30616"/>
    </ligand>
</feature>
<feature type="binding site" evidence="1">
    <location>
        <position position="169"/>
    </location>
    <ligand>
        <name>ATP</name>
        <dbReference type="ChEBI" id="CHEBI:30616"/>
    </ligand>
</feature>
<feature type="binding site" evidence="1">
    <location>
        <position position="170"/>
    </location>
    <ligand>
        <name>ATP</name>
        <dbReference type="ChEBI" id="CHEBI:30616"/>
    </ligand>
</feature>
<feature type="binding site" evidence="1">
    <location>
        <position position="171"/>
    </location>
    <ligand>
        <name>ATP</name>
        <dbReference type="ChEBI" id="CHEBI:30616"/>
    </ligand>
</feature>
<comment type="function">
    <text evidence="1">Plays an essential role in the initiation and regulation of chromosomal replication. ATP-DnaA binds to the origin of replication (oriC) to initiate formation of the DNA replication initiation complex once per cell cycle. Binds the DnaA box (a 9 base pair repeat at the origin) and separates the double-stranded (ds)DNA. Forms a right-handed helical filament on oriC DNA; dsDNA binds to the exterior of the filament while single-stranded (ss)DNA is stabiized in the filament's interior. The ATP-DnaA-oriC complex binds and stabilizes one strand of the AT-rich DNA unwinding element (DUE), permitting loading of DNA polymerase. After initiation quickly degrades to an ADP-DnaA complex that is not apt for DNA replication. Binds acidic phospholipids.</text>
</comment>
<comment type="subunit">
    <text evidence="1">Oligomerizes as a right-handed, spiral filament on DNA at oriC.</text>
</comment>
<comment type="subcellular location">
    <subcellularLocation>
        <location evidence="1">Cytoplasm</location>
    </subcellularLocation>
</comment>
<comment type="domain">
    <text evidence="1">Domain I is involved in oligomerization and binding regulators, domain II is flexibile and of varying length in different bacteria, domain III forms the AAA+ region, while domain IV binds dsDNA.</text>
</comment>
<comment type="similarity">
    <text evidence="1">Belongs to the DnaA family.</text>
</comment>
<sequence>MQAANPIWAEVQQLLQKNLSKPSFETWIRPAKFNCFENGLLTLITPNNFTSDWLRKNYSETIEKAAEEICGHNVKVVFKSETNINNNSNSSDSVSQQNINSQSKSFSINQSNNLINRSKKSHSLNTRYVFKRFVVGPNSRMAHAAALAVAESPGREFNPLFICGGVGLGKTHLMQAVGHYRVEIDPDAKVLYVSTETFSSDLIQSIRKDGMHAFKNKYRSVDLLLIDDIQFLEGKEYTQEEFFNTFNALYEAGKQIVIASDRPPSQIPKLQERLISRFSMGLIADIQPPDIETRMAILQKKAEQERMNLPRDLIQFIAGRFSSNIRELEGAFTRAVAFASITGLPMTVQSIAPMLDPNSVGVVVTPKQVIKKVSDFFEVSAEELVSSSRRKPVSQARQIGMYLMRQGTDLSLPKIGDEFGGKDHTTVMYAIEQVEKKLSSDPNVASQVQKIKDLLQIDSRKNL</sequence>
<evidence type="ECO:0000255" key="1">
    <source>
        <dbReference type="HAMAP-Rule" id="MF_00377"/>
    </source>
</evidence>
<keyword id="KW-0067">ATP-binding</keyword>
<keyword id="KW-0963">Cytoplasm</keyword>
<keyword id="KW-0235">DNA replication</keyword>
<keyword id="KW-0238">DNA-binding</keyword>
<keyword id="KW-0446">Lipid-binding</keyword>
<keyword id="KW-0547">Nucleotide-binding</keyword>
<accession>P0A3A2</accession>
<accession>Q9S487</accession>
<proteinExistence type="inferred from homology"/>